<evidence type="ECO:0000255" key="1">
    <source>
        <dbReference type="HAMAP-Rule" id="MF_00538"/>
    </source>
</evidence>
<protein>
    <recommendedName>
        <fullName evidence="1">Probable 4-amino-4-deoxy-L-arabinose-phosphoundecaprenol flippase subunit ArnF</fullName>
        <shortName evidence="1">L-Ara4N-phosphoundecaprenol flippase subunit ArnF</shortName>
    </recommendedName>
    <alternativeName>
        <fullName evidence="1">Undecaprenyl phosphate-aminoarabinose flippase subunit ArnF</fullName>
    </alternativeName>
</protein>
<organism>
    <name type="scientific">Yersinia pseudotuberculosis serotype O:3 (strain YPIII)</name>
    <dbReference type="NCBI Taxonomy" id="502800"/>
    <lineage>
        <taxon>Bacteria</taxon>
        <taxon>Pseudomonadati</taxon>
        <taxon>Pseudomonadota</taxon>
        <taxon>Gammaproteobacteria</taxon>
        <taxon>Enterobacterales</taxon>
        <taxon>Yersiniaceae</taxon>
        <taxon>Yersinia</taxon>
    </lineage>
</organism>
<proteinExistence type="inferred from homology"/>
<sequence>MKGYLWGGASVVLVTVAQLVLKWGMMNIPLLSLADINVQFLTMYFVQLASVMCGLMGYALSMLCWFFALRYLPLNRAYPLLSLSYALVYLGAVLLPWFNEPATLLKTLGAGFILLGIWLINIKPIKAS</sequence>
<dbReference type="EMBL" id="CP000950">
    <property type="protein sequence ID" value="ACA68128.1"/>
    <property type="molecule type" value="Genomic_DNA"/>
</dbReference>
<dbReference type="RefSeq" id="WP_002211819.1">
    <property type="nucleotide sequence ID" value="NZ_CP009792.1"/>
</dbReference>
<dbReference type="GeneID" id="57976261"/>
<dbReference type="KEGG" id="ypy:YPK_1837"/>
<dbReference type="PATRIC" id="fig|502800.11.peg.2506"/>
<dbReference type="UniPathway" id="UPA00030"/>
<dbReference type="GO" id="GO:0005886">
    <property type="term" value="C:plasma membrane"/>
    <property type="evidence" value="ECO:0007669"/>
    <property type="project" value="UniProtKB-SubCell"/>
</dbReference>
<dbReference type="GO" id="GO:1901505">
    <property type="term" value="F:carbohydrate derivative transmembrane transporter activity"/>
    <property type="evidence" value="ECO:0007669"/>
    <property type="project" value="InterPro"/>
</dbReference>
<dbReference type="GO" id="GO:0009245">
    <property type="term" value="P:lipid A biosynthetic process"/>
    <property type="evidence" value="ECO:0007669"/>
    <property type="project" value="UniProtKB-UniRule"/>
</dbReference>
<dbReference type="GO" id="GO:0009103">
    <property type="term" value="P:lipopolysaccharide biosynthetic process"/>
    <property type="evidence" value="ECO:0007669"/>
    <property type="project" value="UniProtKB-UniRule"/>
</dbReference>
<dbReference type="Gene3D" id="1.10.3730.20">
    <property type="match status" value="1"/>
</dbReference>
<dbReference type="HAMAP" id="MF_00538">
    <property type="entry name" value="Flippase_ArnF"/>
    <property type="match status" value="1"/>
</dbReference>
<dbReference type="InterPro" id="IPR022832">
    <property type="entry name" value="Flippase_ArnF"/>
</dbReference>
<dbReference type="InterPro" id="IPR000390">
    <property type="entry name" value="Small_drug/metabolite_transptr"/>
</dbReference>
<dbReference type="NCBIfam" id="NF002816">
    <property type="entry name" value="PRK02971.1-2"/>
    <property type="match status" value="1"/>
</dbReference>
<dbReference type="PANTHER" id="PTHR30561:SF9">
    <property type="entry name" value="4-AMINO-4-DEOXY-L-ARABINOSE-PHOSPHOUNDECAPRENOL FLIPPASE SUBUNIT ARNF-RELATED"/>
    <property type="match status" value="1"/>
</dbReference>
<dbReference type="PANTHER" id="PTHR30561">
    <property type="entry name" value="SMR FAMILY PROTON-DEPENDENT DRUG EFFLUX TRANSPORTER SUGE"/>
    <property type="match status" value="1"/>
</dbReference>
<dbReference type="SUPFAM" id="SSF103481">
    <property type="entry name" value="Multidrug resistance efflux transporter EmrE"/>
    <property type="match status" value="1"/>
</dbReference>
<comment type="function">
    <text evidence="1">Translocates 4-amino-4-deoxy-L-arabinose-phosphoundecaprenol (alpha-L-Ara4N-phosphoundecaprenol) from the cytoplasmic to the periplasmic side of the inner membrane.</text>
</comment>
<comment type="pathway">
    <text evidence="1">Bacterial outer membrane biogenesis; lipopolysaccharide biosynthesis.</text>
</comment>
<comment type="subunit">
    <text evidence="1">Heterodimer of ArnE and ArnF.</text>
</comment>
<comment type="subcellular location">
    <subcellularLocation>
        <location evidence="1">Cell inner membrane</location>
        <topology evidence="1">Multi-pass membrane protein</topology>
    </subcellularLocation>
</comment>
<comment type="similarity">
    <text evidence="1">Belongs to the ArnF family.</text>
</comment>
<feature type="chain" id="PRO_1000128674" description="Probable 4-amino-4-deoxy-L-arabinose-phosphoundecaprenol flippase subunit ArnF">
    <location>
        <begin position="1"/>
        <end position="128"/>
    </location>
</feature>
<feature type="topological domain" description="Cytoplasmic" evidence="1">
    <location>
        <begin position="1"/>
        <end position="10"/>
    </location>
</feature>
<feature type="transmembrane region" description="Helical" evidence="1">
    <location>
        <begin position="11"/>
        <end position="31"/>
    </location>
</feature>
<feature type="topological domain" description="Periplasmic" evidence="1">
    <location>
        <begin position="32"/>
        <end position="47"/>
    </location>
</feature>
<feature type="transmembrane region" description="Helical" evidence="1">
    <location>
        <begin position="48"/>
        <end position="68"/>
    </location>
</feature>
<feature type="topological domain" description="Cytoplasmic" evidence="1">
    <location>
        <begin position="69"/>
        <end position="77"/>
    </location>
</feature>
<feature type="transmembrane region" description="Helical" evidence="1">
    <location>
        <begin position="78"/>
        <end position="98"/>
    </location>
</feature>
<feature type="topological domain" description="Periplasmic" evidence="1">
    <location>
        <begin position="99"/>
        <end position="101"/>
    </location>
</feature>
<feature type="transmembrane region" description="Helical" evidence="1">
    <location>
        <begin position="102"/>
        <end position="122"/>
    </location>
</feature>
<feature type="topological domain" description="Cytoplasmic" evidence="1">
    <location>
        <begin position="123"/>
        <end position="128"/>
    </location>
</feature>
<keyword id="KW-0997">Cell inner membrane</keyword>
<keyword id="KW-1003">Cell membrane</keyword>
<keyword id="KW-0441">Lipid A biosynthesis</keyword>
<keyword id="KW-0444">Lipid biosynthesis</keyword>
<keyword id="KW-0443">Lipid metabolism</keyword>
<keyword id="KW-0448">Lipopolysaccharide biosynthesis</keyword>
<keyword id="KW-0472">Membrane</keyword>
<keyword id="KW-0812">Transmembrane</keyword>
<keyword id="KW-1133">Transmembrane helix</keyword>
<keyword id="KW-0813">Transport</keyword>
<name>ARNF_YERPY</name>
<gene>
    <name evidence="1" type="primary">arnF</name>
    <name type="ordered locus">YPK_1837</name>
</gene>
<reference key="1">
    <citation type="submission" date="2008-02" db="EMBL/GenBank/DDBJ databases">
        <title>Complete sequence of Yersinia pseudotuberculosis YPIII.</title>
        <authorList>
            <consortium name="US DOE Joint Genome Institute"/>
            <person name="Copeland A."/>
            <person name="Lucas S."/>
            <person name="Lapidus A."/>
            <person name="Glavina del Rio T."/>
            <person name="Dalin E."/>
            <person name="Tice H."/>
            <person name="Bruce D."/>
            <person name="Goodwin L."/>
            <person name="Pitluck S."/>
            <person name="Munk A.C."/>
            <person name="Brettin T."/>
            <person name="Detter J.C."/>
            <person name="Han C."/>
            <person name="Tapia R."/>
            <person name="Schmutz J."/>
            <person name="Larimer F."/>
            <person name="Land M."/>
            <person name="Hauser L."/>
            <person name="Challacombe J.F."/>
            <person name="Green L."/>
            <person name="Lindler L.E."/>
            <person name="Nikolich M.P."/>
            <person name="Richardson P."/>
        </authorList>
    </citation>
    <scope>NUCLEOTIDE SEQUENCE [LARGE SCALE GENOMIC DNA]</scope>
    <source>
        <strain>YPIII</strain>
    </source>
</reference>
<accession>B1JJ34</accession>